<keyword id="KW-0378">Hydrolase</keyword>
<keyword id="KW-0460">Magnesium</keyword>
<keyword id="KW-0479">Metal-binding</keyword>
<keyword id="KW-0540">Nuclease</keyword>
<keyword id="KW-0614">Plasmid</keyword>
<keyword id="KW-1185">Reference proteome</keyword>
<keyword id="KW-1277">Toxin-antitoxin system</keyword>
<proteinExistence type="inferred from homology"/>
<reference key="1">
    <citation type="journal article" date="1997" name="Nature">
        <title>Molecular basis of symbiosis between Rhizobium and legumes.</title>
        <authorList>
            <person name="Freiberg C.A."/>
            <person name="Fellay R."/>
            <person name="Bairoch A."/>
            <person name="Broughton W.J."/>
            <person name="Rosenthal A."/>
            <person name="Perret X."/>
        </authorList>
    </citation>
    <scope>NUCLEOTIDE SEQUENCE [LARGE SCALE GENOMIC DNA]</scope>
    <source>
        <strain>NBRC 101917 / NGR234</strain>
    </source>
</reference>
<reference key="2">
    <citation type="journal article" date="2009" name="Appl. Environ. Microbiol.">
        <title>Rhizobium sp. strain NGR234 possesses a remarkable number of secretion systems.</title>
        <authorList>
            <person name="Schmeisser C."/>
            <person name="Liesegang H."/>
            <person name="Krysciak D."/>
            <person name="Bakkou N."/>
            <person name="Le Quere A."/>
            <person name="Wollherr A."/>
            <person name="Heinemeyer I."/>
            <person name="Morgenstern B."/>
            <person name="Pommerening-Roeser A."/>
            <person name="Flores M."/>
            <person name="Palacios R."/>
            <person name="Brenner S."/>
            <person name="Gottschalk G."/>
            <person name="Schmitz R.A."/>
            <person name="Broughton W.J."/>
            <person name="Perret X."/>
            <person name="Strittmatter A.W."/>
            <person name="Streit W.R."/>
        </authorList>
    </citation>
    <scope>NUCLEOTIDE SEQUENCE [LARGE SCALE GENOMIC DNA]</scope>
    <source>
        <strain>NBRC 101917 / NGR234</strain>
    </source>
</reference>
<accession>P55511</accession>
<feature type="chain" id="PRO_0000200877" description="VapC ribonuclease Y4jK">
    <location>
        <begin position="1"/>
        <end position="140"/>
    </location>
</feature>
<feature type="domain" description="PINc" evidence="1">
    <location>
        <begin position="2"/>
        <end position="135"/>
    </location>
</feature>
<feature type="binding site" evidence="1">
    <location>
        <position position="5"/>
    </location>
    <ligand>
        <name>Mg(2+)</name>
        <dbReference type="ChEBI" id="CHEBI:18420"/>
    </ligand>
</feature>
<feature type="binding site" evidence="1">
    <location>
        <position position="104"/>
    </location>
    <ligand>
        <name>Mg(2+)</name>
        <dbReference type="ChEBI" id="CHEBI:18420"/>
    </ligand>
</feature>
<dbReference type="EC" id="3.1.-.-" evidence="1"/>
<dbReference type="EMBL" id="U00090">
    <property type="protein sequence ID" value="AAB91723.1"/>
    <property type="molecule type" value="Genomic_DNA"/>
</dbReference>
<dbReference type="PIR" id="T28638">
    <property type="entry name" value="T28638"/>
</dbReference>
<dbReference type="RefSeq" id="NP_443921.1">
    <property type="nucleotide sequence ID" value="NC_000914.2"/>
</dbReference>
<dbReference type="RefSeq" id="WP_010875325.1">
    <property type="nucleotide sequence ID" value="NC_000914.2"/>
</dbReference>
<dbReference type="SMR" id="P55511"/>
<dbReference type="KEGG" id="rhi:NGR_a03040"/>
<dbReference type="PATRIC" id="fig|394.7.peg.316"/>
<dbReference type="eggNOG" id="COG1487">
    <property type="taxonomic scope" value="Bacteria"/>
</dbReference>
<dbReference type="HOGENOM" id="CLU_118482_8_2_5"/>
<dbReference type="OrthoDB" id="5458135at2"/>
<dbReference type="Proteomes" id="UP000001054">
    <property type="component" value="Plasmid pNGR234a"/>
</dbReference>
<dbReference type="GO" id="GO:0000287">
    <property type="term" value="F:magnesium ion binding"/>
    <property type="evidence" value="ECO:0007669"/>
    <property type="project" value="UniProtKB-UniRule"/>
</dbReference>
<dbReference type="GO" id="GO:0004540">
    <property type="term" value="F:RNA nuclease activity"/>
    <property type="evidence" value="ECO:0007669"/>
    <property type="project" value="InterPro"/>
</dbReference>
<dbReference type="CDD" id="cd18731">
    <property type="entry name" value="PIN_NgFitB-like"/>
    <property type="match status" value="1"/>
</dbReference>
<dbReference type="Gene3D" id="3.40.50.1010">
    <property type="entry name" value="5'-nuclease"/>
    <property type="match status" value="1"/>
</dbReference>
<dbReference type="HAMAP" id="MF_00265">
    <property type="entry name" value="VapC_Nob1"/>
    <property type="match status" value="1"/>
</dbReference>
<dbReference type="InterPro" id="IPR029060">
    <property type="entry name" value="PIN-like_dom_sf"/>
</dbReference>
<dbReference type="InterPro" id="IPR002716">
    <property type="entry name" value="PIN_dom"/>
</dbReference>
<dbReference type="InterPro" id="IPR050556">
    <property type="entry name" value="Type_II_TA_system_RNase"/>
</dbReference>
<dbReference type="InterPro" id="IPR022907">
    <property type="entry name" value="VapC_family"/>
</dbReference>
<dbReference type="PANTHER" id="PTHR33653">
    <property type="entry name" value="RIBONUCLEASE VAPC2"/>
    <property type="match status" value="1"/>
</dbReference>
<dbReference type="PANTHER" id="PTHR33653:SF1">
    <property type="entry name" value="RIBONUCLEASE VAPC2"/>
    <property type="match status" value="1"/>
</dbReference>
<dbReference type="Pfam" id="PF01850">
    <property type="entry name" value="PIN"/>
    <property type="match status" value="1"/>
</dbReference>
<dbReference type="SUPFAM" id="SSF88723">
    <property type="entry name" value="PIN domain-like"/>
    <property type="match status" value="1"/>
</dbReference>
<evidence type="ECO:0000255" key="1">
    <source>
        <dbReference type="HAMAP-Rule" id="MF_00265"/>
    </source>
</evidence>
<evidence type="ECO:0000305" key="2"/>
<protein>
    <recommendedName>
        <fullName>VapC ribonuclease Y4jK</fullName>
        <shortName>RNase Y4jK</shortName>
        <ecNumber evidence="1">3.1.-.-</ecNumber>
    </recommendedName>
    <alternativeName>
        <fullName>Putative plasmid stability protein Y4jK</fullName>
    </alternativeName>
    <alternativeName>
        <fullName>Toxin Y4jK</fullName>
    </alternativeName>
</protein>
<organism>
    <name type="scientific">Sinorhizobium fredii (strain NBRC 101917 / NGR234)</name>
    <dbReference type="NCBI Taxonomy" id="394"/>
    <lineage>
        <taxon>Bacteria</taxon>
        <taxon>Pseudomonadati</taxon>
        <taxon>Pseudomonadota</taxon>
        <taxon>Alphaproteobacteria</taxon>
        <taxon>Hyphomicrobiales</taxon>
        <taxon>Rhizobiaceae</taxon>
        <taxon>Sinorhizobium/Ensifer group</taxon>
        <taxon>Sinorhizobium</taxon>
    </lineage>
</organism>
<geneLocation type="plasmid">
    <name>sym pNGR234a</name>
</geneLocation>
<comment type="function">
    <text evidence="1 2">Toxic component of a type II toxin-antitoxin (TA) system. An RNase (By similarity). Involved in plasmid stability (Probable).</text>
</comment>
<comment type="cofactor">
    <cofactor evidence="1">
        <name>Mg(2+)</name>
        <dbReference type="ChEBI" id="CHEBI:18420"/>
    </cofactor>
</comment>
<comment type="similarity">
    <text evidence="1">Belongs to the PINc/VapC protein family.</text>
</comment>
<name>Y4JK_SINFN</name>
<gene>
    <name type="ordered locus">NGR_a03040</name>
    <name type="ORF">y4jK</name>
</gene>
<sequence length="140" mass="15119">MIVLDTNVISELWKAEPDRAVLAWIDAQMIETLYLSAITVAELRFGLAAMPAGKRRTIFQNRLEGEVLPALAGRVLPFDLDASRSYADLMAQAKTSGKVIGKADGYIAATAVAHGFMVATRDTSPFEAAGLDIINPWEPA</sequence>